<sequence length="498" mass="56583">MEDKAQYVFALLGILATLYFVRWSTDPLRHIPAIGPSAPIVSYLSAYRYCRNAQSILQEGYHKYKVFRVSLVDRWVVVVSGADMNEELRKVPDTHVSFQEAADDLVQLKYTIAPDVNEHPIHTPVIRGPLTRNLGALFPDVVDEINVAFPELMPAAAKRGEWVAVSVRDTMGRIVSRASNRIFVGLPLCRNPDYLKTVVEFAFSVAKSRTIINAAPAVFRPIVGHFLPWAKRAVRNAGVHVKPLIRQRVSKMQDAGDDQTDKSCDYLMWLIEEAQKTKQNLDIVVQGILVSNFAAIHTSSNSITHSLLNLAAYPQHVQPLREEIEGIIKEYGWTKEAIGKMWKLDSFMRESQRLSGISGISVMRKVLQDITLSDGTYLPKGTLVVAAAFATHTDERYYENPEVFEPFRFYDMRTENDALRKQYVNTSREFITFGHGKHACPGRFFAVNELKAMMAYIILHYDVKLEEGVSRPENVWIWHNISPASTKVLFRERQSKVQ</sequence>
<evidence type="ECO:0000250" key="1">
    <source>
        <dbReference type="UniProtKB" id="P04798"/>
    </source>
</evidence>
<evidence type="ECO:0000255" key="2"/>
<evidence type="ECO:0000255" key="3">
    <source>
        <dbReference type="PROSITE-ProRule" id="PRU00498"/>
    </source>
</evidence>
<evidence type="ECO:0000269" key="4">
    <source>
    </source>
</evidence>
<evidence type="ECO:0000303" key="5">
    <source>
    </source>
</evidence>
<evidence type="ECO:0000305" key="6"/>
<organism>
    <name type="scientific">Postia placenta (strain ATCC 44394 / Madison 698-R)</name>
    <name type="common">Brown rot fungus</name>
    <name type="synonym">Poria monticola</name>
    <dbReference type="NCBI Taxonomy" id="561896"/>
    <lineage>
        <taxon>Eukaryota</taxon>
        <taxon>Fungi</taxon>
        <taxon>Dikarya</taxon>
        <taxon>Basidiomycota</taxon>
        <taxon>Agaricomycotina</taxon>
        <taxon>Agaricomycetes</taxon>
        <taxon>Polyporales</taxon>
        <taxon>Adustoporiaceae</taxon>
        <taxon>Rhodonia</taxon>
    </lineage>
</organism>
<keyword id="KW-0325">Glycoprotein</keyword>
<keyword id="KW-0349">Heme</keyword>
<keyword id="KW-0408">Iron</keyword>
<keyword id="KW-0472">Membrane</keyword>
<keyword id="KW-0479">Metal-binding</keyword>
<keyword id="KW-0503">Monooxygenase</keyword>
<keyword id="KW-0560">Oxidoreductase</keyword>
<keyword id="KW-0812">Transmembrane</keyword>
<keyword id="KW-1133">Transmembrane helix</keyword>
<feature type="chain" id="PRO_0000451360" description="Cytochrome P450 monooxygenase 71">
    <location>
        <begin position="1"/>
        <end position="498"/>
    </location>
</feature>
<feature type="transmembrane region" description="Helical" evidence="2">
    <location>
        <begin position="7"/>
        <end position="24"/>
    </location>
</feature>
<feature type="binding site" description="axial binding residue" evidence="1">
    <location>
        <position position="440"/>
    </location>
    <ligand>
        <name>heme</name>
        <dbReference type="ChEBI" id="CHEBI:30413"/>
    </ligand>
    <ligandPart>
        <name>Fe</name>
        <dbReference type="ChEBI" id="CHEBI:18248"/>
    </ligandPart>
</feature>
<feature type="glycosylation site" description="N-linked (GlcNAc...) asparagine" evidence="3">
    <location>
        <position position="425"/>
    </location>
</feature>
<name>CY071_POSPM</name>
<accession>F1SY71</accession>
<gene>
    <name evidence="5" type="primary">CYP071</name>
    <name evidence="5" type="synonym">CYP512N6v1</name>
</gene>
<protein>
    <recommendedName>
        <fullName evidence="5">Cytochrome P450 monooxygenase 71</fullName>
        <ecNumber evidence="4">1.-.-.-</ecNumber>
    </recommendedName>
</protein>
<comment type="function">
    <text evidence="4">Cytochrome P450 monooxygenase that is able to use dehydroabietic acid and testosterone as substrates for oxidation, suggesting that the natural substrate(s) may be structurally related to steroid compounds.</text>
</comment>
<comment type="cofactor">
    <cofactor evidence="1">
        <name>heme</name>
        <dbReference type="ChEBI" id="CHEBI:30413"/>
    </cofactor>
</comment>
<comment type="pathway">
    <text evidence="6">Secondary metabolite biosynthesis.</text>
</comment>
<comment type="subcellular location">
    <subcellularLocation>
        <location evidence="2">Membrane</location>
        <topology evidence="2">Single-pass membrane protein</topology>
    </subcellularLocation>
</comment>
<comment type="similarity">
    <text evidence="6">Belongs to the cytochrome P450 family.</text>
</comment>
<proteinExistence type="evidence at protein level"/>
<reference key="1">
    <citation type="journal article" date="2012" name="Arch. Microbiol.">
        <title>Molecular identification and functional characterization of cytochrome P450 monooxygenases from the brown-rot basidiomycete Postia placenta.</title>
        <authorList>
            <person name="Ide M."/>
            <person name="Ichinose H."/>
            <person name="Wariishi H."/>
        </authorList>
    </citation>
    <scope>NUCLEOTIDE SEQUENCE [MRNA]</scope>
    <scope>IDENTIFICATION</scope>
    <scope>FUNCTION</scope>
    <scope>CATALYTIC ACTIVITY</scope>
    <source>
        <strain>ATCC 44394 / Madison 698-R</strain>
    </source>
</reference>
<dbReference type="EC" id="1.-.-.-" evidence="4"/>
<dbReference type="EMBL" id="AB573282">
    <property type="protein sequence ID" value="BAK09415.1"/>
    <property type="molecule type" value="mRNA"/>
</dbReference>
<dbReference type="SMR" id="F1SY71"/>
<dbReference type="GlyCosmos" id="F1SY71">
    <property type="glycosylation" value="1 site, No reported glycans"/>
</dbReference>
<dbReference type="GO" id="GO:0016020">
    <property type="term" value="C:membrane"/>
    <property type="evidence" value="ECO:0007669"/>
    <property type="project" value="UniProtKB-SubCell"/>
</dbReference>
<dbReference type="GO" id="GO:0020037">
    <property type="term" value="F:heme binding"/>
    <property type="evidence" value="ECO:0007669"/>
    <property type="project" value="InterPro"/>
</dbReference>
<dbReference type="GO" id="GO:0005506">
    <property type="term" value="F:iron ion binding"/>
    <property type="evidence" value="ECO:0007669"/>
    <property type="project" value="InterPro"/>
</dbReference>
<dbReference type="GO" id="GO:0004497">
    <property type="term" value="F:monooxygenase activity"/>
    <property type="evidence" value="ECO:0007669"/>
    <property type="project" value="UniProtKB-KW"/>
</dbReference>
<dbReference type="GO" id="GO:0016705">
    <property type="term" value="F:oxidoreductase activity, acting on paired donors, with incorporation or reduction of molecular oxygen"/>
    <property type="evidence" value="ECO:0007669"/>
    <property type="project" value="InterPro"/>
</dbReference>
<dbReference type="GO" id="GO:0019748">
    <property type="term" value="P:secondary metabolic process"/>
    <property type="evidence" value="ECO:0007669"/>
    <property type="project" value="UniProtKB-ARBA"/>
</dbReference>
<dbReference type="CDD" id="cd11041">
    <property type="entry name" value="CYP503A1-like"/>
    <property type="match status" value="1"/>
</dbReference>
<dbReference type="Gene3D" id="1.10.630.10">
    <property type="entry name" value="Cytochrome P450"/>
    <property type="match status" value="1"/>
</dbReference>
<dbReference type="InterPro" id="IPR001128">
    <property type="entry name" value="Cyt_P450"/>
</dbReference>
<dbReference type="InterPro" id="IPR017972">
    <property type="entry name" value="Cyt_P450_CS"/>
</dbReference>
<dbReference type="InterPro" id="IPR002401">
    <property type="entry name" value="Cyt_P450_E_grp-I"/>
</dbReference>
<dbReference type="InterPro" id="IPR036396">
    <property type="entry name" value="Cyt_P450_sf"/>
</dbReference>
<dbReference type="PANTHER" id="PTHR46206">
    <property type="entry name" value="CYTOCHROME P450"/>
    <property type="match status" value="1"/>
</dbReference>
<dbReference type="Pfam" id="PF00067">
    <property type="entry name" value="p450"/>
    <property type="match status" value="1"/>
</dbReference>
<dbReference type="PRINTS" id="PR00463">
    <property type="entry name" value="EP450I"/>
</dbReference>
<dbReference type="SUPFAM" id="SSF48264">
    <property type="entry name" value="Cytochrome P450"/>
    <property type="match status" value="1"/>
</dbReference>
<dbReference type="PROSITE" id="PS00086">
    <property type="entry name" value="CYTOCHROME_P450"/>
    <property type="match status" value="1"/>
</dbReference>